<keyword id="KW-0028">Amino-acid biosynthesis</keyword>
<keyword id="KW-0057">Aromatic amino acid biosynthesis</keyword>
<keyword id="KW-0456">Lyase</keyword>
<keyword id="KW-0822">Tryptophan biosynthesis</keyword>
<gene>
    <name evidence="1" type="primary">trpA</name>
    <name type="ordered locus">lin1668</name>
</gene>
<evidence type="ECO:0000255" key="1">
    <source>
        <dbReference type="HAMAP-Rule" id="MF_00131"/>
    </source>
</evidence>
<reference key="1">
    <citation type="journal article" date="2001" name="Science">
        <title>Comparative genomics of Listeria species.</title>
        <authorList>
            <person name="Glaser P."/>
            <person name="Frangeul L."/>
            <person name="Buchrieser C."/>
            <person name="Rusniok C."/>
            <person name="Amend A."/>
            <person name="Baquero F."/>
            <person name="Berche P."/>
            <person name="Bloecker H."/>
            <person name="Brandt P."/>
            <person name="Chakraborty T."/>
            <person name="Charbit A."/>
            <person name="Chetouani F."/>
            <person name="Couve E."/>
            <person name="de Daruvar A."/>
            <person name="Dehoux P."/>
            <person name="Domann E."/>
            <person name="Dominguez-Bernal G."/>
            <person name="Duchaud E."/>
            <person name="Durant L."/>
            <person name="Dussurget O."/>
            <person name="Entian K.-D."/>
            <person name="Fsihi H."/>
            <person name="Garcia-del Portillo F."/>
            <person name="Garrido P."/>
            <person name="Gautier L."/>
            <person name="Goebel W."/>
            <person name="Gomez-Lopez N."/>
            <person name="Hain T."/>
            <person name="Hauf J."/>
            <person name="Jackson D."/>
            <person name="Jones L.-M."/>
            <person name="Kaerst U."/>
            <person name="Kreft J."/>
            <person name="Kuhn M."/>
            <person name="Kunst F."/>
            <person name="Kurapkat G."/>
            <person name="Madueno E."/>
            <person name="Maitournam A."/>
            <person name="Mata Vicente J."/>
            <person name="Ng E."/>
            <person name="Nedjari H."/>
            <person name="Nordsiek G."/>
            <person name="Novella S."/>
            <person name="de Pablos B."/>
            <person name="Perez-Diaz J.-C."/>
            <person name="Purcell R."/>
            <person name="Remmel B."/>
            <person name="Rose M."/>
            <person name="Schlueter T."/>
            <person name="Simoes N."/>
            <person name="Tierrez A."/>
            <person name="Vazquez-Boland J.-A."/>
            <person name="Voss H."/>
            <person name="Wehland J."/>
            <person name="Cossart P."/>
        </authorList>
    </citation>
    <scope>NUCLEOTIDE SEQUENCE [LARGE SCALE GENOMIC DNA]</scope>
    <source>
        <strain>ATCC BAA-680 / CLIP 11262</strain>
    </source>
</reference>
<feature type="chain" id="PRO_0000098803" description="Tryptophan synthase alpha chain">
    <location>
        <begin position="1"/>
        <end position="257"/>
    </location>
</feature>
<feature type="active site" description="Proton acceptor" evidence="1">
    <location>
        <position position="47"/>
    </location>
</feature>
<feature type="active site" description="Proton acceptor" evidence="1">
    <location>
        <position position="58"/>
    </location>
</feature>
<organism>
    <name type="scientific">Listeria innocua serovar 6a (strain ATCC BAA-680 / CLIP 11262)</name>
    <dbReference type="NCBI Taxonomy" id="272626"/>
    <lineage>
        <taxon>Bacteria</taxon>
        <taxon>Bacillati</taxon>
        <taxon>Bacillota</taxon>
        <taxon>Bacilli</taxon>
        <taxon>Bacillales</taxon>
        <taxon>Listeriaceae</taxon>
        <taxon>Listeria</taxon>
    </lineage>
</organism>
<comment type="function">
    <text evidence="1">The alpha subunit is responsible for the aldol cleavage of indoleglycerol phosphate to indole and glyceraldehyde 3-phosphate.</text>
</comment>
<comment type="catalytic activity">
    <reaction evidence="1">
        <text>(1S,2R)-1-C-(indol-3-yl)glycerol 3-phosphate + L-serine = D-glyceraldehyde 3-phosphate + L-tryptophan + H2O</text>
        <dbReference type="Rhea" id="RHEA:10532"/>
        <dbReference type="ChEBI" id="CHEBI:15377"/>
        <dbReference type="ChEBI" id="CHEBI:33384"/>
        <dbReference type="ChEBI" id="CHEBI:57912"/>
        <dbReference type="ChEBI" id="CHEBI:58866"/>
        <dbReference type="ChEBI" id="CHEBI:59776"/>
        <dbReference type="EC" id="4.2.1.20"/>
    </reaction>
</comment>
<comment type="pathway">
    <text evidence="1">Amino-acid biosynthesis; L-tryptophan biosynthesis; L-tryptophan from chorismate: step 5/5.</text>
</comment>
<comment type="subunit">
    <text evidence="1">Tetramer of two alpha and two beta chains.</text>
</comment>
<comment type="similarity">
    <text evidence="1">Belongs to the TrpA family.</text>
</comment>
<dbReference type="EC" id="4.2.1.20" evidence="1"/>
<dbReference type="EMBL" id="AL596169">
    <property type="protein sequence ID" value="CAC96899.1"/>
    <property type="molecule type" value="Genomic_DNA"/>
</dbReference>
<dbReference type="PIR" id="AC1641">
    <property type="entry name" value="AC1641"/>
</dbReference>
<dbReference type="RefSeq" id="WP_003772093.1">
    <property type="nucleotide sequence ID" value="NC_003212.1"/>
</dbReference>
<dbReference type="SMR" id="Q92B82"/>
<dbReference type="STRING" id="272626.gene:17565999"/>
<dbReference type="GeneID" id="93235050"/>
<dbReference type="KEGG" id="lin:trpA"/>
<dbReference type="eggNOG" id="COG0159">
    <property type="taxonomic scope" value="Bacteria"/>
</dbReference>
<dbReference type="HOGENOM" id="CLU_016734_0_0_9"/>
<dbReference type="OrthoDB" id="9804578at2"/>
<dbReference type="UniPathway" id="UPA00035">
    <property type="reaction ID" value="UER00044"/>
</dbReference>
<dbReference type="Proteomes" id="UP000002513">
    <property type="component" value="Chromosome"/>
</dbReference>
<dbReference type="GO" id="GO:0005829">
    <property type="term" value="C:cytosol"/>
    <property type="evidence" value="ECO:0007669"/>
    <property type="project" value="TreeGrafter"/>
</dbReference>
<dbReference type="GO" id="GO:0004834">
    <property type="term" value="F:tryptophan synthase activity"/>
    <property type="evidence" value="ECO:0007669"/>
    <property type="project" value="UniProtKB-UniRule"/>
</dbReference>
<dbReference type="CDD" id="cd04724">
    <property type="entry name" value="Tryptophan_synthase_alpha"/>
    <property type="match status" value="1"/>
</dbReference>
<dbReference type="Gene3D" id="3.20.20.70">
    <property type="entry name" value="Aldolase class I"/>
    <property type="match status" value="1"/>
</dbReference>
<dbReference type="HAMAP" id="MF_00131">
    <property type="entry name" value="Trp_synth_alpha"/>
    <property type="match status" value="1"/>
</dbReference>
<dbReference type="InterPro" id="IPR013785">
    <property type="entry name" value="Aldolase_TIM"/>
</dbReference>
<dbReference type="InterPro" id="IPR011060">
    <property type="entry name" value="RibuloseP-bd_barrel"/>
</dbReference>
<dbReference type="InterPro" id="IPR018204">
    <property type="entry name" value="Trp_synthase_alpha_AS"/>
</dbReference>
<dbReference type="InterPro" id="IPR002028">
    <property type="entry name" value="Trp_synthase_suA"/>
</dbReference>
<dbReference type="NCBIfam" id="TIGR00262">
    <property type="entry name" value="trpA"/>
    <property type="match status" value="1"/>
</dbReference>
<dbReference type="PANTHER" id="PTHR43406:SF1">
    <property type="entry name" value="TRYPTOPHAN SYNTHASE ALPHA CHAIN, CHLOROPLASTIC"/>
    <property type="match status" value="1"/>
</dbReference>
<dbReference type="PANTHER" id="PTHR43406">
    <property type="entry name" value="TRYPTOPHAN SYNTHASE, ALPHA CHAIN"/>
    <property type="match status" value="1"/>
</dbReference>
<dbReference type="Pfam" id="PF00290">
    <property type="entry name" value="Trp_syntA"/>
    <property type="match status" value="1"/>
</dbReference>
<dbReference type="SUPFAM" id="SSF51366">
    <property type="entry name" value="Ribulose-phoshate binding barrel"/>
    <property type="match status" value="1"/>
</dbReference>
<dbReference type="PROSITE" id="PS00167">
    <property type="entry name" value="TRP_SYNTHASE_ALPHA"/>
    <property type="match status" value="1"/>
</dbReference>
<protein>
    <recommendedName>
        <fullName evidence="1">Tryptophan synthase alpha chain</fullName>
        <ecNumber evidence="1">4.2.1.20</ecNumber>
    </recommendedName>
</protein>
<accession>Q92B82</accession>
<name>TRPA_LISIN</name>
<proteinExistence type="inferred from homology"/>
<sequence>MTKTLTKKLANKDHASVVTYIMGGDGGLDNLEEQLLFLEKSGVSAIEIGIPFSDPVADGPVIQLAGLRALKERVSLEAILTKLATSKVQIPLIIMSYINPIFHLGIPKFIEMVQKTPVKGLIIPDLPYEHRTLITPELKGTDIALIPLVSLTSPKERLEEIANQAEGFIYAVTVNGTTGVRNEFNTHIDTHLAYLKSISPVPVLAGFGVSSIEHVEKFARVCDGVIIGSKVVQMLHDGETRELGTFLQNAAEVQIEN</sequence>